<reference key="1">
    <citation type="journal article" date="2005" name="Nucleic Acids Res.">
        <title>Genome dynamics and diversity of Shigella species, the etiologic agents of bacillary dysentery.</title>
        <authorList>
            <person name="Yang F."/>
            <person name="Yang J."/>
            <person name="Zhang X."/>
            <person name="Chen L."/>
            <person name="Jiang Y."/>
            <person name="Yan Y."/>
            <person name="Tang X."/>
            <person name="Wang J."/>
            <person name="Xiong Z."/>
            <person name="Dong J."/>
            <person name="Xue Y."/>
            <person name="Zhu Y."/>
            <person name="Xu X."/>
            <person name="Sun L."/>
            <person name="Chen S."/>
            <person name="Nie H."/>
            <person name="Peng J."/>
            <person name="Xu J."/>
            <person name="Wang Y."/>
            <person name="Yuan Z."/>
            <person name="Wen Y."/>
            <person name="Yao Z."/>
            <person name="Shen Y."/>
            <person name="Qiang B."/>
            <person name="Hou Y."/>
            <person name="Yu J."/>
            <person name="Jin Q."/>
        </authorList>
    </citation>
    <scope>NUCLEOTIDE SEQUENCE [LARGE SCALE GENOMIC DNA]</scope>
    <source>
        <strain>Ss046</strain>
    </source>
</reference>
<organism>
    <name type="scientific">Shigella sonnei (strain Ss046)</name>
    <dbReference type="NCBI Taxonomy" id="300269"/>
    <lineage>
        <taxon>Bacteria</taxon>
        <taxon>Pseudomonadati</taxon>
        <taxon>Pseudomonadota</taxon>
        <taxon>Gammaproteobacteria</taxon>
        <taxon>Enterobacterales</taxon>
        <taxon>Enterobacteriaceae</taxon>
        <taxon>Shigella</taxon>
    </lineage>
</organism>
<dbReference type="EMBL" id="CP000038">
    <property type="protein sequence ID" value="AAZ87663.1"/>
    <property type="molecule type" value="Genomic_DNA"/>
</dbReference>
<dbReference type="RefSeq" id="WP_001288850.1">
    <property type="nucleotide sequence ID" value="NC_007384.1"/>
</dbReference>
<dbReference type="SMR" id="Q3Z3J9"/>
<dbReference type="GeneID" id="93776493"/>
<dbReference type="KEGG" id="ssn:SSON_0924"/>
<dbReference type="HOGENOM" id="CLU_049853_0_0_6"/>
<dbReference type="Proteomes" id="UP000002529">
    <property type="component" value="Chromosome"/>
</dbReference>
<dbReference type="GO" id="GO:0005737">
    <property type="term" value="C:cytoplasm"/>
    <property type="evidence" value="ECO:0007669"/>
    <property type="project" value="UniProtKB-UniRule"/>
</dbReference>
<dbReference type="GO" id="GO:0009295">
    <property type="term" value="C:nucleoid"/>
    <property type="evidence" value="ECO:0007669"/>
    <property type="project" value="UniProtKB-SubCell"/>
</dbReference>
<dbReference type="GO" id="GO:0005509">
    <property type="term" value="F:calcium ion binding"/>
    <property type="evidence" value="ECO:0007669"/>
    <property type="project" value="UniProtKB-UniRule"/>
</dbReference>
<dbReference type="GO" id="GO:0051301">
    <property type="term" value="P:cell division"/>
    <property type="evidence" value="ECO:0007669"/>
    <property type="project" value="UniProtKB-KW"/>
</dbReference>
<dbReference type="GO" id="GO:0030261">
    <property type="term" value="P:chromosome condensation"/>
    <property type="evidence" value="ECO:0007669"/>
    <property type="project" value="UniProtKB-KW"/>
</dbReference>
<dbReference type="GO" id="GO:0007059">
    <property type="term" value="P:chromosome segregation"/>
    <property type="evidence" value="ECO:0007669"/>
    <property type="project" value="UniProtKB-UniRule"/>
</dbReference>
<dbReference type="GO" id="GO:0006260">
    <property type="term" value="P:DNA replication"/>
    <property type="evidence" value="ECO:0007669"/>
    <property type="project" value="UniProtKB-UniRule"/>
</dbReference>
<dbReference type="CDD" id="cd16337">
    <property type="entry name" value="MukF_C"/>
    <property type="match status" value="1"/>
</dbReference>
<dbReference type="CDD" id="cd16335">
    <property type="entry name" value="MukF_N"/>
    <property type="match status" value="1"/>
</dbReference>
<dbReference type="Gene3D" id="1.20.58.590">
    <property type="entry name" value="Chromosome partition protein MukF, middle domain"/>
    <property type="match status" value="1"/>
</dbReference>
<dbReference type="Gene3D" id="1.10.225.40">
    <property type="entry name" value="MukF, C-terminal domain"/>
    <property type="match status" value="1"/>
</dbReference>
<dbReference type="Gene3D" id="1.10.10.10">
    <property type="entry name" value="Winged helix-like DNA-binding domain superfamily/Winged helix DNA-binding domain"/>
    <property type="match status" value="1"/>
</dbReference>
<dbReference type="HAMAP" id="MF_01803">
    <property type="entry name" value="MukF"/>
    <property type="match status" value="1"/>
</dbReference>
<dbReference type="InterPro" id="IPR005582">
    <property type="entry name" value="Chromosome_partition_MukF"/>
</dbReference>
<dbReference type="InterPro" id="IPR033441">
    <property type="entry name" value="MukF_C"/>
</dbReference>
<dbReference type="InterPro" id="IPR038198">
    <property type="entry name" value="MukF_C_sf"/>
</dbReference>
<dbReference type="InterPro" id="IPR033440">
    <property type="entry name" value="MukF_M"/>
</dbReference>
<dbReference type="InterPro" id="IPR036141">
    <property type="entry name" value="MukF_M_sp"/>
</dbReference>
<dbReference type="InterPro" id="IPR033439">
    <property type="entry name" value="MukF_WHTH"/>
</dbReference>
<dbReference type="InterPro" id="IPR036388">
    <property type="entry name" value="WH-like_DNA-bd_sf"/>
</dbReference>
<dbReference type="InterPro" id="IPR036390">
    <property type="entry name" value="WH_DNA-bd_sf"/>
</dbReference>
<dbReference type="NCBIfam" id="NF003615">
    <property type="entry name" value="PRK05260.1"/>
    <property type="match status" value="1"/>
</dbReference>
<dbReference type="Pfam" id="PF03882">
    <property type="entry name" value="KicB"/>
    <property type="match status" value="1"/>
</dbReference>
<dbReference type="Pfam" id="PF17193">
    <property type="entry name" value="MukF_C"/>
    <property type="match status" value="1"/>
</dbReference>
<dbReference type="Pfam" id="PF17192">
    <property type="entry name" value="MukF_M"/>
    <property type="match status" value="1"/>
</dbReference>
<dbReference type="PIRSF" id="PIRSF018282">
    <property type="entry name" value="MukF"/>
    <property type="match status" value="1"/>
</dbReference>
<dbReference type="SUPFAM" id="SSF140570">
    <property type="entry name" value="MukF C-terminal domain-like"/>
    <property type="match status" value="1"/>
</dbReference>
<dbReference type="SUPFAM" id="SSF46785">
    <property type="entry name" value="Winged helix' DNA-binding domain"/>
    <property type="match status" value="1"/>
</dbReference>
<feature type="chain" id="PRO_1000069943" description="Chromosome partition protein MukF">
    <location>
        <begin position="1"/>
        <end position="440"/>
    </location>
</feature>
<feature type="region of interest" description="Leucine-zipper">
    <location>
        <begin position="208"/>
        <end position="236"/>
    </location>
</feature>
<protein>
    <recommendedName>
        <fullName evidence="1">Chromosome partition protein MukF</fullName>
    </recommendedName>
</protein>
<comment type="function">
    <text evidence="1">Involved in chromosome condensation, segregation and cell cycle progression. May participate in facilitating chromosome segregation by condensation DNA from both sides of a centrally located replisome during cell division. Not required for mini-F plasmid partitioning. Probably acts via its interaction with MukB and MukE. Overexpression results in anucleate cells. It has a calcium binding activity.</text>
</comment>
<comment type="subunit">
    <text evidence="1">Interacts, and probably forms a ternary complex, with MukE and MukB via its C-terminal region. The complex formation is stimulated by calcium or magnesium. It is required for an interaction between MukE and MukB.</text>
</comment>
<comment type="subcellular location">
    <subcellularLocation>
        <location evidence="1">Cytoplasm</location>
        <location evidence="1">Nucleoid</location>
    </subcellularLocation>
    <text evidence="1">Restricted to the nucleoid region.</text>
</comment>
<comment type="similarity">
    <text evidence="1">Belongs to the MukF family.</text>
</comment>
<keyword id="KW-0106">Calcium</keyword>
<keyword id="KW-0131">Cell cycle</keyword>
<keyword id="KW-0132">Cell division</keyword>
<keyword id="KW-0159">Chromosome partition</keyword>
<keyword id="KW-0963">Cytoplasm</keyword>
<keyword id="KW-0226">DNA condensation</keyword>
<keyword id="KW-1185">Reference proteome</keyword>
<evidence type="ECO:0000255" key="1">
    <source>
        <dbReference type="HAMAP-Rule" id="MF_01803"/>
    </source>
</evidence>
<name>MUKF_SHISS</name>
<accession>Q3Z3J9</accession>
<gene>
    <name evidence="1" type="primary">mukF</name>
    <name type="ordered locus">SSON_0924</name>
</gene>
<sequence length="440" mass="50579">MSEFSQTVPELVAWARKNDFSISLPVDRLSFLLAVATLNGERLDGEMSEGELVDAFRHVSDAFEQTSETIGVRANNAINDMVRQRLLNRFTSEQAEGNAIYRLTPLGIGITDYYIRQREFSTLRLSMQLSIVAGELKRAADAAEEGGDEFHWHRNVYAPLKYSVAEIFDSIDLTQRLMDEQQQQVKDDIAQLLNKDWRAAISSCELLLSETSGTLRELQDTLEAAGDKLQANLLRIQDATMTHDDLHFVDRLVFDLQSKLDRIISWGQQSIDLWIGYDRHVHKFIRTAIDMDKNRVFAQRLRQSVQTYFDEPWALTYANADRLLDMRDEEMALRDEEVTGELPEDLEYEEFNEIREQLAAIIEEQLAVYKTRQVPLDLGLVVREYLSQYPRARHFDVARIVIDQAVRLGVAQADFTGLPAKWQPINDYGAKVQAHVIDKY</sequence>
<proteinExistence type="inferred from homology"/>